<protein>
    <recommendedName>
        <fullName evidence="1">Nucleoside diphosphate kinase</fullName>
        <shortName evidence="1">NDK</shortName>
        <shortName evidence="1">NDP kinase</shortName>
        <ecNumber evidence="1">2.7.4.6</ecNumber>
    </recommendedName>
    <alternativeName>
        <fullName evidence="1">Nucleoside-2-P kinase</fullName>
    </alternativeName>
</protein>
<proteinExistence type="inferred from homology"/>
<accession>Q65UT5</accession>
<name>NDK_MANSM</name>
<gene>
    <name evidence="1" type="primary">ndk</name>
    <name type="ordered locus">MS0668</name>
</gene>
<reference key="1">
    <citation type="journal article" date="2004" name="Nat. Biotechnol.">
        <title>The genome sequence of the capnophilic rumen bacterium Mannheimia succiniciproducens.</title>
        <authorList>
            <person name="Hong S.H."/>
            <person name="Kim J.S."/>
            <person name="Lee S.Y."/>
            <person name="In Y.H."/>
            <person name="Choi S.S."/>
            <person name="Rih J.-K."/>
            <person name="Kim C.H."/>
            <person name="Jeong H."/>
            <person name="Hur C.G."/>
            <person name="Kim J.J."/>
        </authorList>
    </citation>
    <scope>NUCLEOTIDE SEQUENCE [LARGE SCALE GENOMIC DNA]</scope>
    <source>
        <strain>KCTC 0769BP / MBEL55E</strain>
    </source>
</reference>
<comment type="function">
    <text evidence="1">Major role in the synthesis of nucleoside triphosphates other than ATP. The ATP gamma phosphate is transferred to the NDP beta phosphate via a ping-pong mechanism, using a phosphorylated active-site intermediate.</text>
</comment>
<comment type="catalytic activity">
    <reaction evidence="1">
        <text>a 2'-deoxyribonucleoside 5'-diphosphate + ATP = a 2'-deoxyribonucleoside 5'-triphosphate + ADP</text>
        <dbReference type="Rhea" id="RHEA:44640"/>
        <dbReference type="ChEBI" id="CHEBI:30616"/>
        <dbReference type="ChEBI" id="CHEBI:61560"/>
        <dbReference type="ChEBI" id="CHEBI:73316"/>
        <dbReference type="ChEBI" id="CHEBI:456216"/>
        <dbReference type="EC" id="2.7.4.6"/>
    </reaction>
</comment>
<comment type="catalytic activity">
    <reaction evidence="1">
        <text>a ribonucleoside 5'-diphosphate + ATP = a ribonucleoside 5'-triphosphate + ADP</text>
        <dbReference type="Rhea" id="RHEA:18113"/>
        <dbReference type="ChEBI" id="CHEBI:30616"/>
        <dbReference type="ChEBI" id="CHEBI:57930"/>
        <dbReference type="ChEBI" id="CHEBI:61557"/>
        <dbReference type="ChEBI" id="CHEBI:456216"/>
        <dbReference type="EC" id="2.7.4.6"/>
    </reaction>
</comment>
<comment type="cofactor">
    <cofactor evidence="1">
        <name>Mg(2+)</name>
        <dbReference type="ChEBI" id="CHEBI:18420"/>
    </cofactor>
</comment>
<comment type="subunit">
    <text evidence="1">Homotetramer.</text>
</comment>
<comment type="subcellular location">
    <subcellularLocation>
        <location evidence="1">Cytoplasm</location>
    </subcellularLocation>
</comment>
<comment type="similarity">
    <text evidence="1">Belongs to the NDK family.</text>
</comment>
<dbReference type="EC" id="2.7.4.6" evidence="1"/>
<dbReference type="EMBL" id="AE016827">
    <property type="protein sequence ID" value="AAU37275.1"/>
    <property type="molecule type" value="Genomic_DNA"/>
</dbReference>
<dbReference type="RefSeq" id="WP_011199847.1">
    <property type="nucleotide sequence ID" value="NC_006300.1"/>
</dbReference>
<dbReference type="SMR" id="Q65UT5"/>
<dbReference type="STRING" id="221988.MS0668"/>
<dbReference type="KEGG" id="msu:MS0668"/>
<dbReference type="eggNOG" id="COG0105">
    <property type="taxonomic scope" value="Bacteria"/>
</dbReference>
<dbReference type="HOGENOM" id="CLU_060216_8_1_6"/>
<dbReference type="OrthoDB" id="9801161at2"/>
<dbReference type="Proteomes" id="UP000000607">
    <property type="component" value="Chromosome"/>
</dbReference>
<dbReference type="GO" id="GO:0005737">
    <property type="term" value="C:cytoplasm"/>
    <property type="evidence" value="ECO:0007669"/>
    <property type="project" value="UniProtKB-SubCell"/>
</dbReference>
<dbReference type="GO" id="GO:0005524">
    <property type="term" value="F:ATP binding"/>
    <property type="evidence" value="ECO:0007669"/>
    <property type="project" value="UniProtKB-UniRule"/>
</dbReference>
<dbReference type="GO" id="GO:0046872">
    <property type="term" value="F:metal ion binding"/>
    <property type="evidence" value="ECO:0007669"/>
    <property type="project" value="UniProtKB-KW"/>
</dbReference>
<dbReference type="GO" id="GO:0004550">
    <property type="term" value="F:nucleoside diphosphate kinase activity"/>
    <property type="evidence" value="ECO:0007669"/>
    <property type="project" value="UniProtKB-UniRule"/>
</dbReference>
<dbReference type="GO" id="GO:0006241">
    <property type="term" value="P:CTP biosynthetic process"/>
    <property type="evidence" value="ECO:0007669"/>
    <property type="project" value="UniProtKB-UniRule"/>
</dbReference>
<dbReference type="GO" id="GO:0006183">
    <property type="term" value="P:GTP biosynthetic process"/>
    <property type="evidence" value="ECO:0007669"/>
    <property type="project" value="UniProtKB-UniRule"/>
</dbReference>
<dbReference type="GO" id="GO:0006228">
    <property type="term" value="P:UTP biosynthetic process"/>
    <property type="evidence" value="ECO:0007669"/>
    <property type="project" value="UniProtKB-UniRule"/>
</dbReference>
<dbReference type="CDD" id="cd04413">
    <property type="entry name" value="NDPk_I"/>
    <property type="match status" value="1"/>
</dbReference>
<dbReference type="FunFam" id="3.30.70.141:FF:000001">
    <property type="entry name" value="Nucleoside diphosphate kinase"/>
    <property type="match status" value="1"/>
</dbReference>
<dbReference type="Gene3D" id="3.30.70.141">
    <property type="entry name" value="Nucleoside diphosphate kinase-like domain"/>
    <property type="match status" value="1"/>
</dbReference>
<dbReference type="HAMAP" id="MF_00451">
    <property type="entry name" value="NDP_kinase"/>
    <property type="match status" value="1"/>
</dbReference>
<dbReference type="InterPro" id="IPR034907">
    <property type="entry name" value="NDK-like_dom"/>
</dbReference>
<dbReference type="InterPro" id="IPR036850">
    <property type="entry name" value="NDK-like_dom_sf"/>
</dbReference>
<dbReference type="InterPro" id="IPR001564">
    <property type="entry name" value="Nucleoside_diP_kinase"/>
</dbReference>
<dbReference type="InterPro" id="IPR023005">
    <property type="entry name" value="Nucleoside_diP_kinase_AS"/>
</dbReference>
<dbReference type="NCBIfam" id="NF001908">
    <property type="entry name" value="PRK00668.1"/>
    <property type="match status" value="1"/>
</dbReference>
<dbReference type="PANTHER" id="PTHR46161">
    <property type="entry name" value="NUCLEOSIDE DIPHOSPHATE KINASE"/>
    <property type="match status" value="1"/>
</dbReference>
<dbReference type="PANTHER" id="PTHR46161:SF3">
    <property type="entry name" value="NUCLEOSIDE DIPHOSPHATE KINASE DDB_G0292928-RELATED"/>
    <property type="match status" value="1"/>
</dbReference>
<dbReference type="Pfam" id="PF00334">
    <property type="entry name" value="NDK"/>
    <property type="match status" value="1"/>
</dbReference>
<dbReference type="PRINTS" id="PR01243">
    <property type="entry name" value="NUCDPKINASE"/>
</dbReference>
<dbReference type="SMART" id="SM00562">
    <property type="entry name" value="NDK"/>
    <property type="match status" value="1"/>
</dbReference>
<dbReference type="SUPFAM" id="SSF54919">
    <property type="entry name" value="Nucleoside diphosphate kinase, NDK"/>
    <property type="match status" value="1"/>
</dbReference>
<dbReference type="PROSITE" id="PS00469">
    <property type="entry name" value="NDPK"/>
    <property type="match status" value="1"/>
</dbReference>
<dbReference type="PROSITE" id="PS51374">
    <property type="entry name" value="NDPK_LIKE"/>
    <property type="match status" value="1"/>
</dbReference>
<organism>
    <name type="scientific">Mannheimia succiniciproducens (strain KCTC 0769BP / MBEL55E)</name>
    <dbReference type="NCBI Taxonomy" id="221988"/>
    <lineage>
        <taxon>Bacteria</taxon>
        <taxon>Pseudomonadati</taxon>
        <taxon>Pseudomonadota</taxon>
        <taxon>Gammaproteobacteria</taxon>
        <taxon>Pasteurellales</taxon>
        <taxon>Pasteurellaceae</taxon>
        <taxon>Basfia</taxon>
    </lineage>
</organism>
<keyword id="KW-0067">ATP-binding</keyword>
<keyword id="KW-0963">Cytoplasm</keyword>
<keyword id="KW-0418">Kinase</keyword>
<keyword id="KW-0460">Magnesium</keyword>
<keyword id="KW-0479">Metal-binding</keyword>
<keyword id="KW-0546">Nucleotide metabolism</keyword>
<keyword id="KW-0547">Nucleotide-binding</keyword>
<keyword id="KW-0597">Phosphoprotein</keyword>
<keyword id="KW-0808">Transferase</keyword>
<sequence>MSLERTFSIIKPDAVERNLIGKILARFEQSGFEIVAAKMVRLTKAQAEGFYAEHQGKPFFEDLVEYMVSAPILVSVLQKENAVKDYRTLIGATDPAKAKEGTVRKEFAESLRRNSVHGSDSLESAAREIAYFFIDSEICSR</sequence>
<evidence type="ECO:0000255" key="1">
    <source>
        <dbReference type="HAMAP-Rule" id="MF_00451"/>
    </source>
</evidence>
<feature type="chain" id="PRO_0000137003" description="Nucleoside diphosphate kinase">
    <location>
        <begin position="1"/>
        <end position="141"/>
    </location>
</feature>
<feature type="active site" description="Pros-phosphohistidine intermediate" evidence="1">
    <location>
        <position position="117"/>
    </location>
</feature>
<feature type="binding site" evidence="1">
    <location>
        <position position="11"/>
    </location>
    <ligand>
        <name>ATP</name>
        <dbReference type="ChEBI" id="CHEBI:30616"/>
    </ligand>
</feature>
<feature type="binding site" evidence="1">
    <location>
        <position position="59"/>
    </location>
    <ligand>
        <name>ATP</name>
        <dbReference type="ChEBI" id="CHEBI:30616"/>
    </ligand>
</feature>
<feature type="binding site" evidence="1">
    <location>
        <position position="87"/>
    </location>
    <ligand>
        <name>ATP</name>
        <dbReference type="ChEBI" id="CHEBI:30616"/>
    </ligand>
</feature>
<feature type="binding site" evidence="1">
    <location>
        <position position="93"/>
    </location>
    <ligand>
        <name>ATP</name>
        <dbReference type="ChEBI" id="CHEBI:30616"/>
    </ligand>
</feature>
<feature type="binding site" evidence="1">
    <location>
        <position position="104"/>
    </location>
    <ligand>
        <name>ATP</name>
        <dbReference type="ChEBI" id="CHEBI:30616"/>
    </ligand>
</feature>
<feature type="binding site" evidence="1">
    <location>
        <position position="114"/>
    </location>
    <ligand>
        <name>ATP</name>
        <dbReference type="ChEBI" id="CHEBI:30616"/>
    </ligand>
</feature>